<protein>
    <recommendedName>
        <fullName>Uncharacterized methyltransferase Mflv_0427</fullName>
        <ecNumber>2.1.1.-</ecNumber>
    </recommendedName>
</protein>
<proteinExistence type="inferred from homology"/>
<gene>
    <name type="ordered locus">Mflv_0427</name>
</gene>
<organism>
    <name type="scientific">Mycolicibacterium gilvum (strain PYR-GCK)</name>
    <name type="common">Mycobacterium gilvum (strain PYR-GCK)</name>
    <dbReference type="NCBI Taxonomy" id="350054"/>
    <lineage>
        <taxon>Bacteria</taxon>
        <taxon>Bacillati</taxon>
        <taxon>Actinomycetota</taxon>
        <taxon>Actinomycetes</taxon>
        <taxon>Mycobacteriales</taxon>
        <taxon>Mycobacteriaceae</taxon>
        <taxon>Mycolicibacterium</taxon>
    </lineage>
</organism>
<feature type="chain" id="PRO_0000380600" description="Uncharacterized methyltransferase Mflv_0427">
    <location>
        <begin position="1"/>
        <end position="255"/>
    </location>
</feature>
<evidence type="ECO:0000305" key="1"/>
<sequence length="255" mass="27562">MAATDLLAGRATLSRSLRLLSAFRFEQTDPDRFYGALASDTVAMVDDLWRATTGTSTRNLTVLDVGGGPGYFASAFTDAGLHYVGVEPDPGEMHAAAPRTHSRAGSFVRASGTALPFADGSVDICLSSNVAEHVAQPWRLGEEMLRVTRPGGLAVLSYTVWLGPFGGHEMGLSHYLGGYRAAERYTRRHGHRPKNDYGSSLFAVSAADGLRWARSTGALAAAFPRYHPRWAWGLTRVPGVREFLVSNLVLVLRPT</sequence>
<name>Y427_MYCGI</name>
<keyword id="KW-0489">Methyltransferase</keyword>
<keyword id="KW-0808">Transferase</keyword>
<reference key="1">
    <citation type="submission" date="2007-04" db="EMBL/GenBank/DDBJ databases">
        <title>Complete sequence of chromosome of Mycobacterium gilvum PYR-GCK.</title>
        <authorList>
            <consortium name="US DOE Joint Genome Institute"/>
            <person name="Copeland A."/>
            <person name="Lucas S."/>
            <person name="Lapidus A."/>
            <person name="Barry K."/>
            <person name="Detter J.C."/>
            <person name="Glavina del Rio T."/>
            <person name="Hammon N."/>
            <person name="Israni S."/>
            <person name="Dalin E."/>
            <person name="Tice H."/>
            <person name="Pitluck S."/>
            <person name="Chain P."/>
            <person name="Malfatti S."/>
            <person name="Shin M."/>
            <person name="Vergez L."/>
            <person name="Schmutz J."/>
            <person name="Larimer F."/>
            <person name="Land M."/>
            <person name="Hauser L."/>
            <person name="Kyrpides N."/>
            <person name="Mikhailova N."/>
            <person name="Miller C."/>
            <person name="Richardson P."/>
        </authorList>
    </citation>
    <scope>NUCLEOTIDE SEQUENCE [LARGE SCALE GENOMIC DNA]</scope>
    <source>
        <strain>PYR-GCK</strain>
    </source>
</reference>
<accession>A4T3V1</accession>
<dbReference type="EC" id="2.1.1.-"/>
<dbReference type="EMBL" id="CP000656">
    <property type="protein sequence ID" value="ABP42921.1"/>
    <property type="molecule type" value="Genomic_DNA"/>
</dbReference>
<dbReference type="SMR" id="A4T3V1"/>
<dbReference type="STRING" id="350054.Mflv_0427"/>
<dbReference type="KEGG" id="mgi:Mflv_0427"/>
<dbReference type="eggNOG" id="COG0500">
    <property type="taxonomic scope" value="Bacteria"/>
</dbReference>
<dbReference type="HOGENOM" id="CLU_073035_0_0_11"/>
<dbReference type="OrthoDB" id="3206826at2"/>
<dbReference type="GO" id="GO:0008757">
    <property type="term" value="F:S-adenosylmethionine-dependent methyltransferase activity"/>
    <property type="evidence" value="ECO:0007669"/>
    <property type="project" value="InterPro"/>
</dbReference>
<dbReference type="GO" id="GO:0032259">
    <property type="term" value="P:methylation"/>
    <property type="evidence" value="ECO:0007669"/>
    <property type="project" value="UniProtKB-KW"/>
</dbReference>
<dbReference type="CDD" id="cd02440">
    <property type="entry name" value="AdoMet_MTases"/>
    <property type="match status" value="1"/>
</dbReference>
<dbReference type="Gene3D" id="3.40.50.150">
    <property type="entry name" value="Vaccinia Virus protein VP39"/>
    <property type="match status" value="1"/>
</dbReference>
<dbReference type="InterPro" id="IPR013216">
    <property type="entry name" value="Methyltransf_11"/>
</dbReference>
<dbReference type="InterPro" id="IPR029063">
    <property type="entry name" value="SAM-dependent_MTases_sf"/>
</dbReference>
<dbReference type="PANTHER" id="PTHR43591:SF24">
    <property type="entry name" value="2-METHOXY-6-POLYPRENYL-1,4-BENZOQUINOL METHYLASE, MITOCHONDRIAL"/>
    <property type="match status" value="1"/>
</dbReference>
<dbReference type="PANTHER" id="PTHR43591">
    <property type="entry name" value="METHYLTRANSFERASE"/>
    <property type="match status" value="1"/>
</dbReference>
<dbReference type="Pfam" id="PF08241">
    <property type="entry name" value="Methyltransf_11"/>
    <property type="match status" value="1"/>
</dbReference>
<dbReference type="SUPFAM" id="SSF53335">
    <property type="entry name" value="S-adenosyl-L-methionine-dependent methyltransferases"/>
    <property type="match status" value="1"/>
</dbReference>
<comment type="similarity">
    <text evidence="1">Belongs to the methyltransferase superfamily.</text>
</comment>